<name>VKGC_BOVIN</name>
<feature type="initiator methionine" description="Removed" evidence="3">
    <location>
        <position position="1"/>
    </location>
</feature>
<feature type="chain" id="PRO_0000191821" description="Vitamin K-dependent gamma-carboxylase">
    <location>
        <begin position="2"/>
        <end position="758"/>
    </location>
</feature>
<feature type="topological domain" description="Cytoplasmic" evidence="4">
    <location>
        <begin position="2"/>
        <end position="60"/>
    </location>
</feature>
<feature type="transmembrane region" description="Helical" evidence="4">
    <location>
        <begin position="61"/>
        <end position="81"/>
    </location>
</feature>
<feature type="topological domain" description="Lumenal" evidence="4">
    <location>
        <begin position="82"/>
        <end position="113"/>
    </location>
</feature>
<feature type="transmembrane region" description="Helical" evidence="4">
    <location>
        <begin position="114"/>
        <end position="134"/>
    </location>
</feature>
<feature type="topological domain" description="Cytoplasmic" evidence="4">
    <location>
        <begin position="135"/>
        <end position="136"/>
    </location>
</feature>
<feature type="transmembrane region" description="Helical" evidence="4">
    <location>
        <begin position="137"/>
        <end position="157"/>
    </location>
</feature>
<feature type="topological domain" description="Lumenal" evidence="4">
    <location>
        <begin position="158"/>
        <end position="292"/>
    </location>
</feature>
<feature type="transmembrane region" description="Helical" evidence="4">
    <location>
        <begin position="293"/>
        <end position="313"/>
    </location>
</feature>
<feature type="topological domain" description="Cytoplasmic" evidence="4">
    <location>
        <begin position="314"/>
        <end position="363"/>
    </location>
</feature>
<feature type="transmembrane region" description="Helical" evidence="4">
    <location>
        <begin position="364"/>
        <end position="384"/>
    </location>
</feature>
<feature type="topological domain" description="Lumenal" evidence="4">
    <location>
        <begin position="385"/>
        <end position="758"/>
    </location>
</feature>
<feature type="region of interest" description="Disordered" evidence="5">
    <location>
        <begin position="1"/>
        <end position="34"/>
    </location>
</feature>
<feature type="region of interest" description="Disordered" evidence="5">
    <location>
        <begin position="727"/>
        <end position="758"/>
    </location>
</feature>
<feature type="compositionally biased region" description="Basic and acidic residues" evidence="5">
    <location>
        <begin position="12"/>
        <end position="22"/>
    </location>
</feature>
<feature type="compositionally biased region" description="Basic and acidic residues" evidence="5">
    <location>
        <begin position="749"/>
        <end position="758"/>
    </location>
</feature>
<feature type="modified residue" description="N-acetylalanine" evidence="3">
    <location>
        <position position="2"/>
    </location>
</feature>
<feature type="disulfide bond" evidence="1">
    <location>
        <begin position="99"/>
        <end position="450"/>
    </location>
</feature>
<reference key="1">
    <citation type="journal article" date="1993" name="Proc. Natl. Acad. Sci. U.S.A.">
        <title>In vitro and in vivo functional characterization of bovine vitamin K-dependent gamma-carboxylase expressed in Chinese hamster ovary cells.</title>
        <authorList>
            <person name="Rehemtulla A."/>
            <person name="Roth D.A."/>
            <person name="Wasley L.C."/>
            <person name="Kuliopulos A."/>
            <person name="Walsh C.T."/>
            <person name="Furie B."/>
            <person name="Furie B.C."/>
            <person name="Kaufman R.J."/>
        </authorList>
    </citation>
    <scope>NUCLEOTIDE SEQUENCE [MRNA]</scope>
    <scope>PARTIAL PROTEIN SEQUENCE</scope>
    <source>
        <tissue>Liver</tissue>
    </source>
</reference>
<reference key="2">
    <citation type="journal article" date="1991" name="Science">
        <title>Cloning and expression of the cDNA for human gamma-glutamyl carboxylase.</title>
        <authorList>
            <person name="Wu S.-M."/>
            <person name="Cheung W.-F."/>
            <person name="Frazier D."/>
            <person name="Stafford D.W."/>
        </authorList>
    </citation>
    <scope>NUCLEOTIDE SEQUENCE [MRNA] OF 96-758</scope>
    <scope>PARTIAL PROTEIN SEQUENCE</scope>
    <source>
        <tissue>Liver</tissue>
    </source>
</reference>
<proteinExistence type="evidence at protein level"/>
<dbReference type="EC" id="4.1.1.90" evidence="3"/>
<dbReference type="EMBL" id="L09726">
    <property type="protein sequence ID" value="AAA30425.1"/>
    <property type="molecule type" value="mRNA"/>
</dbReference>
<dbReference type="EMBL" id="M81593">
    <property type="protein sequence ID" value="AAA30410.1"/>
    <property type="molecule type" value="mRNA"/>
</dbReference>
<dbReference type="PIR" id="A47439">
    <property type="entry name" value="A47439"/>
</dbReference>
<dbReference type="RefSeq" id="NP_776491.1">
    <property type="nucleotide sequence ID" value="NM_174066.2"/>
</dbReference>
<dbReference type="SMR" id="Q07175"/>
<dbReference type="FunCoup" id="Q07175">
    <property type="interactions" value="778"/>
</dbReference>
<dbReference type="STRING" id="9913.ENSBTAP00000027811"/>
<dbReference type="PaxDb" id="9913-ENSBTAP00000027811"/>
<dbReference type="PeptideAtlas" id="Q07175"/>
<dbReference type="Ensembl" id="ENSBTAT00000027811.4">
    <property type="protein sequence ID" value="ENSBTAP00000027811.3"/>
    <property type="gene ID" value="ENSBTAG00000038477.3"/>
</dbReference>
<dbReference type="GeneID" id="281190"/>
<dbReference type="KEGG" id="bta:281190"/>
<dbReference type="CTD" id="2677"/>
<dbReference type="VEuPathDB" id="HostDB:ENSBTAG00000038477"/>
<dbReference type="VGNC" id="VGNC:29339">
    <property type="gene designation" value="GGCX"/>
</dbReference>
<dbReference type="eggNOG" id="ENOG502QRU2">
    <property type="taxonomic scope" value="Eukaryota"/>
</dbReference>
<dbReference type="GeneTree" id="ENSGT00390000014909"/>
<dbReference type="HOGENOM" id="CLU_020495_0_0_1"/>
<dbReference type="InParanoid" id="Q07175"/>
<dbReference type="OMA" id="TYLNHYY"/>
<dbReference type="OrthoDB" id="206689at2759"/>
<dbReference type="TreeFam" id="TF323879"/>
<dbReference type="BRENDA" id="4.1.1.90">
    <property type="organism ID" value="908"/>
</dbReference>
<dbReference type="Reactome" id="R-BTA-159740">
    <property type="pathway name" value="Gamma-carboxylation of protein precursors"/>
</dbReference>
<dbReference type="Proteomes" id="UP000009136">
    <property type="component" value="Chromosome 11"/>
</dbReference>
<dbReference type="Bgee" id="ENSBTAG00000038477">
    <property type="expression patterns" value="Expressed in liver and 106 other cell types or tissues"/>
</dbReference>
<dbReference type="GO" id="GO:0005789">
    <property type="term" value="C:endoplasmic reticulum membrane"/>
    <property type="evidence" value="ECO:0007669"/>
    <property type="project" value="UniProtKB-SubCell"/>
</dbReference>
<dbReference type="GO" id="GO:0008488">
    <property type="term" value="F:gamma-glutamyl carboxylase activity"/>
    <property type="evidence" value="ECO:0000318"/>
    <property type="project" value="GO_Central"/>
</dbReference>
<dbReference type="GO" id="GO:0019842">
    <property type="term" value="F:vitamin binding"/>
    <property type="evidence" value="ECO:0000318"/>
    <property type="project" value="GO_Central"/>
</dbReference>
<dbReference type="GO" id="GO:0042373">
    <property type="term" value="P:vitamin K metabolic process"/>
    <property type="evidence" value="ECO:0000318"/>
    <property type="project" value="GO_Central"/>
</dbReference>
<dbReference type="InterPro" id="IPR011020">
    <property type="entry name" value="HTTM-like"/>
</dbReference>
<dbReference type="InterPro" id="IPR053934">
    <property type="entry name" value="HTTM_dom"/>
</dbReference>
<dbReference type="InterPro" id="IPR011051">
    <property type="entry name" value="RmlC_Cupin_sf"/>
</dbReference>
<dbReference type="InterPro" id="IPR007782">
    <property type="entry name" value="VKG_COase"/>
</dbReference>
<dbReference type="InterPro" id="IPR053935">
    <property type="entry name" value="VKGC_lumenal_dom"/>
</dbReference>
<dbReference type="PANTHER" id="PTHR12639">
    <property type="entry name" value="VITAMIN K-DEPENDENT GAMMA-CARBOXYLASE"/>
    <property type="match status" value="1"/>
</dbReference>
<dbReference type="PANTHER" id="PTHR12639:SF6">
    <property type="entry name" value="VITAMIN K-DEPENDENT GAMMA-CARBOXYLASE"/>
    <property type="match status" value="1"/>
</dbReference>
<dbReference type="Pfam" id="PF05090">
    <property type="entry name" value="HTTM"/>
    <property type="match status" value="1"/>
</dbReference>
<dbReference type="Pfam" id="PF22777">
    <property type="entry name" value="VKGC_lumenal_dom"/>
    <property type="match status" value="1"/>
</dbReference>
<dbReference type="SMART" id="SM00752">
    <property type="entry name" value="HTTM"/>
    <property type="match status" value="1"/>
</dbReference>
<dbReference type="SUPFAM" id="SSF51182">
    <property type="entry name" value="RmlC-like cupins"/>
    <property type="match status" value="1"/>
</dbReference>
<sequence length="758" mass="87557">MAVSARPARAPRGSDKVKKDKAAQTSGPRQGSRMGKLLGFEWTDVSSWERLVTLLNRPTDPAGLAVFRFLFGLMMVLDIPQERGLSSLDRRYLDGLEVCRFPLLDALQPLPLDWMYLIYTIMFLGALGMMLGLCYRISCVLFLLPYWYVFLLDKTSWNNHSYLYGLLAFQLTFVDAHHYWSVDGLLRARKRNAHVPLWNYAVLRGQIFIVYFIAGIKKLDADWVEGYSMEYLSRHWLFSPFKLVLSEEMTSLLVVHWCGLLLDLSAGFLLFFDASRPIGFVFVSYFHCMNSQLFSIGMFPYVMLASSPLFCSPEWPRKLVAHCPKKLQELLPLRTAPQPSTSCMYKRSRARGSQKPGLRHKLSTAFTLLYLLEQLFLPYSHFLTQGYNNWTNGLYGYSWDMMVHSRSHQHVKITYRDGRTGELGYLNPGVFTQSRRWKDHADMLKQYATCLSRLLPKYNVTEPQIYFDIWVSINDRFQQRIFDPRVDIVQAAWSPFQRTPWLQPLLMDLSPWRTKLQEIKSSLDNHTEVVFIADFPGLHLENFVSEDLGNTSIQLLQGEVTVELVAEQKNQTLQEGEKMQLPAGEYHKVYTVSSSPSCYMYIYVNTTEVALEQDLAYLQELKEKVENGSETGPLPPELQPLLEGEVKGGPEPTPLVQTFLRRQQRLQEIERRRNAPFHERLVRFLLRKLFIFRRSFLMTCISLRNLAFGRPSLEQLAQEVTYANLRPFEPAGEPSPVNTDSSNPNPPEPDSHPVHSEF</sequence>
<comment type="function">
    <text evidence="3">Mediates the vitamin K-dependent carboxylation of glutamate residues to calcium-binding gamma-carboxyglutamate (Gla) residues with the concomitant conversion of the reduced hydroquinone form of vitamin K to vitamin K epoxide. Catalyzes gamma-carboxylation of various proteins, such as blood coagulation factors (F2, F7, F9 and F10), osteocalcin (BGLAP) or matrix Gla protein (MGP).</text>
</comment>
<comment type="catalytic activity">
    <reaction evidence="3">
        <text>4-carboxy-L-glutamyl-[protein] + 2,3-epoxyphylloquinone + H2O + H(+) = phylloquinol + L-glutamyl-[protein] + CO2 + O2</text>
        <dbReference type="Rhea" id="RHEA:45140"/>
        <dbReference type="Rhea" id="RHEA-COMP:10208"/>
        <dbReference type="Rhea" id="RHEA-COMP:11094"/>
        <dbReference type="ChEBI" id="CHEBI:15377"/>
        <dbReference type="ChEBI" id="CHEBI:15378"/>
        <dbReference type="ChEBI" id="CHEBI:15379"/>
        <dbReference type="ChEBI" id="CHEBI:15759"/>
        <dbReference type="ChEBI" id="CHEBI:16526"/>
        <dbReference type="ChEBI" id="CHEBI:28433"/>
        <dbReference type="ChEBI" id="CHEBI:29973"/>
        <dbReference type="ChEBI" id="CHEBI:84990"/>
        <dbReference type="EC" id="4.1.1.90"/>
    </reaction>
    <physiologicalReaction direction="right-to-left" evidence="3">
        <dbReference type="Rhea" id="RHEA:45142"/>
    </physiologicalReaction>
</comment>
<comment type="subunit">
    <text evidence="2 3">Monomer (By similarity). May interact with CALU (By similarity).</text>
</comment>
<comment type="subcellular location">
    <subcellularLocation>
        <location evidence="3">Endoplasmic reticulum membrane</location>
        <topology evidence="3">Multi-pass membrane protein</topology>
    </subcellularLocation>
</comment>
<comment type="PTM">
    <text>The N-terminus is blocked.</text>
</comment>
<comment type="miscellaneous">
    <text>The vitamin K-dependent protein substrates of carboxylase have usually a propeptide that binds to a high-affinity site on the carboxylase. CO(2), O(2) and reduced vitamin K are cosubstrates.</text>
</comment>
<gene>
    <name type="primary">GGCX</name>
    <name type="synonym">GC</name>
</gene>
<protein>
    <recommendedName>
        <fullName>Vitamin K-dependent gamma-carboxylase</fullName>
        <ecNumber evidence="3">4.1.1.90</ecNumber>
    </recommendedName>
    <alternativeName>
        <fullName>Gamma-glutamyl carboxylase</fullName>
    </alternativeName>
    <alternativeName>
        <fullName>Peptidyl-glutamate 4-carboxylase</fullName>
    </alternativeName>
    <alternativeName>
        <fullName>Vitamin K gamma glutamyl carboxylase</fullName>
    </alternativeName>
</protein>
<accession>Q07175</accession>
<keyword id="KW-0007">Acetylation</keyword>
<keyword id="KW-0903">Direct protein sequencing</keyword>
<keyword id="KW-1015">Disulfide bond</keyword>
<keyword id="KW-0256">Endoplasmic reticulum</keyword>
<keyword id="KW-0456">Lyase</keyword>
<keyword id="KW-0472">Membrane</keyword>
<keyword id="KW-1185">Reference proteome</keyword>
<keyword id="KW-0812">Transmembrane</keyword>
<keyword id="KW-1133">Transmembrane helix</keyword>
<organism>
    <name type="scientific">Bos taurus</name>
    <name type="common">Bovine</name>
    <dbReference type="NCBI Taxonomy" id="9913"/>
    <lineage>
        <taxon>Eukaryota</taxon>
        <taxon>Metazoa</taxon>
        <taxon>Chordata</taxon>
        <taxon>Craniata</taxon>
        <taxon>Vertebrata</taxon>
        <taxon>Euteleostomi</taxon>
        <taxon>Mammalia</taxon>
        <taxon>Eutheria</taxon>
        <taxon>Laurasiatheria</taxon>
        <taxon>Artiodactyla</taxon>
        <taxon>Ruminantia</taxon>
        <taxon>Pecora</taxon>
        <taxon>Bovidae</taxon>
        <taxon>Bovinae</taxon>
        <taxon>Bos</taxon>
    </lineage>
</organism>
<evidence type="ECO:0000250" key="1"/>
<evidence type="ECO:0000250" key="2">
    <source>
        <dbReference type="UniProtKB" id="O88496"/>
    </source>
</evidence>
<evidence type="ECO:0000250" key="3">
    <source>
        <dbReference type="UniProtKB" id="P38435"/>
    </source>
</evidence>
<evidence type="ECO:0000255" key="4"/>
<evidence type="ECO:0000256" key="5">
    <source>
        <dbReference type="SAM" id="MobiDB-lite"/>
    </source>
</evidence>